<accession>Q01WL4</accession>
<sequence length="240" mass="26635">MRRIRIYLAYDGGPFHGWQVQPGLATIQGILEEIVGGMEGKPVHVAGSGRTDAGVHALAQVAAFSIENPIPVENLRRAVNRLLPPAIRILCAEEVQADFHPRFDAVAKTYEYRMFRDEVCSPFEWPYVYHHPYPLDEARMATLARAFEGEHDFTPFAASDARDAEGKSKVRTIFSSTLDRTPQRLVYRVRGSGFLKHMVRNIVGTLIEAGRGNIADLNSLPARSGATAPAKGLFQVSVEY</sequence>
<organism>
    <name type="scientific">Solibacter usitatus (strain Ellin6076)</name>
    <dbReference type="NCBI Taxonomy" id="234267"/>
    <lineage>
        <taxon>Bacteria</taxon>
        <taxon>Pseudomonadati</taxon>
        <taxon>Acidobacteriota</taxon>
        <taxon>Terriglobia</taxon>
        <taxon>Bryobacterales</taxon>
        <taxon>Solibacteraceae</taxon>
        <taxon>Candidatus Solibacter</taxon>
    </lineage>
</organism>
<evidence type="ECO:0000255" key="1">
    <source>
        <dbReference type="HAMAP-Rule" id="MF_00171"/>
    </source>
</evidence>
<keyword id="KW-0413">Isomerase</keyword>
<keyword id="KW-0819">tRNA processing</keyword>
<protein>
    <recommendedName>
        <fullName evidence="1">tRNA pseudouridine synthase A</fullName>
        <ecNumber evidence="1">5.4.99.12</ecNumber>
    </recommendedName>
    <alternativeName>
        <fullName evidence="1">tRNA pseudouridine(38-40) synthase</fullName>
    </alternativeName>
    <alternativeName>
        <fullName evidence="1">tRNA pseudouridylate synthase I</fullName>
    </alternativeName>
    <alternativeName>
        <fullName evidence="1">tRNA-uridine isomerase I</fullName>
    </alternativeName>
</protein>
<dbReference type="EC" id="5.4.99.12" evidence="1"/>
<dbReference type="EMBL" id="CP000473">
    <property type="protein sequence ID" value="ABJ85951.1"/>
    <property type="molecule type" value="Genomic_DNA"/>
</dbReference>
<dbReference type="SMR" id="Q01WL4"/>
<dbReference type="FunCoup" id="Q01WL4">
    <property type="interactions" value="558"/>
</dbReference>
<dbReference type="STRING" id="234267.Acid_4994"/>
<dbReference type="KEGG" id="sus:Acid_4994"/>
<dbReference type="eggNOG" id="COG0101">
    <property type="taxonomic scope" value="Bacteria"/>
</dbReference>
<dbReference type="HOGENOM" id="CLU_014673_0_1_0"/>
<dbReference type="InParanoid" id="Q01WL4"/>
<dbReference type="OrthoDB" id="9811823at2"/>
<dbReference type="GO" id="GO:0003723">
    <property type="term" value="F:RNA binding"/>
    <property type="evidence" value="ECO:0007669"/>
    <property type="project" value="InterPro"/>
</dbReference>
<dbReference type="GO" id="GO:0160147">
    <property type="term" value="F:tRNA pseudouridine(38-40) synthase activity"/>
    <property type="evidence" value="ECO:0007669"/>
    <property type="project" value="UniProtKB-EC"/>
</dbReference>
<dbReference type="GO" id="GO:0031119">
    <property type="term" value="P:tRNA pseudouridine synthesis"/>
    <property type="evidence" value="ECO:0007669"/>
    <property type="project" value="UniProtKB-UniRule"/>
</dbReference>
<dbReference type="CDD" id="cd02570">
    <property type="entry name" value="PseudoU_synth_EcTruA"/>
    <property type="match status" value="1"/>
</dbReference>
<dbReference type="FunFam" id="3.30.70.580:FF:000001">
    <property type="entry name" value="tRNA pseudouridine synthase A"/>
    <property type="match status" value="1"/>
</dbReference>
<dbReference type="Gene3D" id="3.30.70.660">
    <property type="entry name" value="Pseudouridine synthase I, catalytic domain, C-terminal subdomain"/>
    <property type="match status" value="1"/>
</dbReference>
<dbReference type="Gene3D" id="3.30.70.580">
    <property type="entry name" value="Pseudouridine synthase I, catalytic domain, N-terminal subdomain"/>
    <property type="match status" value="1"/>
</dbReference>
<dbReference type="HAMAP" id="MF_00171">
    <property type="entry name" value="TruA"/>
    <property type="match status" value="1"/>
</dbReference>
<dbReference type="InterPro" id="IPR020103">
    <property type="entry name" value="PsdUridine_synth_cat_dom_sf"/>
</dbReference>
<dbReference type="InterPro" id="IPR001406">
    <property type="entry name" value="PsdUridine_synth_TruA"/>
</dbReference>
<dbReference type="InterPro" id="IPR020097">
    <property type="entry name" value="PsdUridine_synth_TruA_a/b_dom"/>
</dbReference>
<dbReference type="InterPro" id="IPR020095">
    <property type="entry name" value="PsdUridine_synth_TruA_C"/>
</dbReference>
<dbReference type="InterPro" id="IPR020094">
    <property type="entry name" value="TruA/RsuA/RluB/E/F_N"/>
</dbReference>
<dbReference type="NCBIfam" id="TIGR00071">
    <property type="entry name" value="hisT_truA"/>
    <property type="match status" value="1"/>
</dbReference>
<dbReference type="PANTHER" id="PTHR11142">
    <property type="entry name" value="PSEUDOURIDYLATE SYNTHASE"/>
    <property type="match status" value="1"/>
</dbReference>
<dbReference type="PANTHER" id="PTHR11142:SF0">
    <property type="entry name" value="TRNA PSEUDOURIDINE SYNTHASE-LIKE 1"/>
    <property type="match status" value="1"/>
</dbReference>
<dbReference type="Pfam" id="PF01416">
    <property type="entry name" value="PseudoU_synth_1"/>
    <property type="match status" value="2"/>
</dbReference>
<dbReference type="PIRSF" id="PIRSF001430">
    <property type="entry name" value="tRNA_psdUrid_synth"/>
    <property type="match status" value="1"/>
</dbReference>
<dbReference type="SUPFAM" id="SSF55120">
    <property type="entry name" value="Pseudouridine synthase"/>
    <property type="match status" value="1"/>
</dbReference>
<name>TRUA_SOLUE</name>
<reference key="1">
    <citation type="journal article" date="2009" name="Appl. Environ. Microbiol.">
        <title>Three genomes from the phylum Acidobacteria provide insight into the lifestyles of these microorganisms in soils.</title>
        <authorList>
            <person name="Ward N.L."/>
            <person name="Challacombe J.F."/>
            <person name="Janssen P.H."/>
            <person name="Henrissat B."/>
            <person name="Coutinho P.M."/>
            <person name="Wu M."/>
            <person name="Xie G."/>
            <person name="Haft D.H."/>
            <person name="Sait M."/>
            <person name="Badger J."/>
            <person name="Barabote R.D."/>
            <person name="Bradley B."/>
            <person name="Brettin T.S."/>
            <person name="Brinkac L.M."/>
            <person name="Bruce D."/>
            <person name="Creasy T."/>
            <person name="Daugherty S.C."/>
            <person name="Davidsen T.M."/>
            <person name="DeBoy R.T."/>
            <person name="Detter J.C."/>
            <person name="Dodson R.J."/>
            <person name="Durkin A.S."/>
            <person name="Ganapathy A."/>
            <person name="Gwinn-Giglio M."/>
            <person name="Han C.S."/>
            <person name="Khouri H."/>
            <person name="Kiss H."/>
            <person name="Kothari S.P."/>
            <person name="Madupu R."/>
            <person name="Nelson K.E."/>
            <person name="Nelson W.C."/>
            <person name="Paulsen I."/>
            <person name="Penn K."/>
            <person name="Ren Q."/>
            <person name="Rosovitz M.J."/>
            <person name="Selengut J.D."/>
            <person name="Shrivastava S."/>
            <person name="Sullivan S.A."/>
            <person name="Tapia R."/>
            <person name="Thompson L.S."/>
            <person name="Watkins K.L."/>
            <person name="Yang Q."/>
            <person name="Yu C."/>
            <person name="Zafar N."/>
            <person name="Zhou L."/>
            <person name="Kuske C.R."/>
        </authorList>
    </citation>
    <scope>NUCLEOTIDE SEQUENCE [LARGE SCALE GENOMIC DNA]</scope>
    <source>
        <strain>Ellin6076</strain>
    </source>
</reference>
<comment type="function">
    <text evidence="1">Formation of pseudouridine at positions 38, 39 and 40 in the anticodon stem and loop of transfer RNAs.</text>
</comment>
<comment type="catalytic activity">
    <reaction evidence="1">
        <text>uridine(38/39/40) in tRNA = pseudouridine(38/39/40) in tRNA</text>
        <dbReference type="Rhea" id="RHEA:22376"/>
        <dbReference type="Rhea" id="RHEA-COMP:10085"/>
        <dbReference type="Rhea" id="RHEA-COMP:10087"/>
        <dbReference type="ChEBI" id="CHEBI:65314"/>
        <dbReference type="ChEBI" id="CHEBI:65315"/>
        <dbReference type="EC" id="5.4.99.12"/>
    </reaction>
</comment>
<comment type="subunit">
    <text evidence="1">Homodimer.</text>
</comment>
<comment type="similarity">
    <text evidence="1">Belongs to the tRNA pseudouridine synthase TruA family.</text>
</comment>
<gene>
    <name evidence="1" type="primary">truA</name>
    <name type="ordered locus">Acid_4994</name>
</gene>
<proteinExistence type="inferred from homology"/>
<feature type="chain" id="PRO_1000017181" description="tRNA pseudouridine synthase A">
    <location>
        <begin position="1"/>
        <end position="240"/>
    </location>
</feature>
<feature type="active site" description="Nucleophile" evidence="1">
    <location>
        <position position="52"/>
    </location>
</feature>
<feature type="binding site" evidence="1">
    <location>
        <position position="110"/>
    </location>
    <ligand>
        <name>substrate</name>
    </ligand>
</feature>